<name>PELO_PONAB</name>
<feature type="chain" id="PRO_0000232835" description="Protein pelota homolog">
    <location>
        <begin position="1"/>
        <end position="385"/>
    </location>
</feature>
<feature type="modified residue" description="Phosphoserine" evidence="2">
    <location>
        <position position="374"/>
    </location>
</feature>
<feature type="modified residue" description="Phosphoserine" evidence="2">
    <location>
        <position position="380"/>
    </location>
</feature>
<feature type="modified residue" description="Phosphoserine" evidence="2">
    <location>
        <position position="381"/>
    </location>
</feature>
<feature type="modified residue" description="Phosphoserine" evidence="2">
    <location>
        <position position="382"/>
    </location>
</feature>
<feature type="cross-link" description="Glycyl lysine isopeptide (Lys-Gly) (interchain with G-Cter in SUMO2)" evidence="2">
    <location>
        <position position="162"/>
    </location>
</feature>
<gene>
    <name type="primary">PELO</name>
</gene>
<keyword id="KW-0131">Cell cycle</keyword>
<keyword id="KW-0132">Cell division</keyword>
<keyword id="KW-0963">Cytoplasm</keyword>
<keyword id="KW-1017">Isopeptide bond</keyword>
<keyword id="KW-0479">Metal-binding</keyword>
<keyword id="KW-0597">Phosphoprotein</keyword>
<keyword id="KW-1185">Reference proteome</keyword>
<keyword id="KW-0810">Translation regulation</keyword>
<keyword id="KW-0832">Ubl conjugation</keyword>
<reference key="1">
    <citation type="submission" date="2004-11" db="EMBL/GenBank/DDBJ databases">
        <authorList>
            <consortium name="The German cDNA consortium"/>
        </authorList>
    </citation>
    <scope>NUCLEOTIDE SEQUENCE [LARGE SCALE MRNA]</scope>
    <source>
        <tissue>Brain cortex</tissue>
    </source>
</reference>
<evidence type="ECO:0000250" key="1">
    <source>
        <dbReference type="UniProtKB" id="P33309"/>
    </source>
</evidence>
<evidence type="ECO:0000250" key="2">
    <source>
        <dbReference type="UniProtKB" id="Q9BRX2"/>
    </source>
</evidence>
<evidence type="ECO:0000305" key="3"/>
<dbReference type="EMBL" id="CR858328">
    <property type="protein sequence ID" value="CAH90564.1"/>
    <property type="molecule type" value="mRNA"/>
</dbReference>
<dbReference type="RefSeq" id="NP_001125300.1">
    <property type="nucleotide sequence ID" value="NM_001131828.1"/>
</dbReference>
<dbReference type="SMR" id="Q5RCE3"/>
<dbReference type="FunCoup" id="Q5RCE3">
    <property type="interactions" value="860"/>
</dbReference>
<dbReference type="STRING" id="9601.ENSPPYP00000017265"/>
<dbReference type="GeneID" id="100172199"/>
<dbReference type="KEGG" id="pon:100172199"/>
<dbReference type="CTD" id="53918"/>
<dbReference type="eggNOG" id="KOG2869">
    <property type="taxonomic scope" value="Eukaryota"/>
</dbReference>
<dbReference type="InParanoid" id="Q5RCE3"/>
<dbReference type="OrthoDB" id="10249111at2759"/>
<dbReference type="Proteomes" id="UP000001595">
    <property type="component" value="Unplaced"/>
</dbReference>
<dbReference type="GO" id="GO:0005737">
    <property type="term" value="C:cytoplasm"/>
    <property type="evidence" value="ECO:0007669"/>
    <property type="project" value="UniProtKB-SubCell"/>
</dbReference>
<dbReference type="GO" id="GO:1990533">
    <property type="term" value="C:Dom34-Hbs1 complex"/>
    <property type="evidence" value="ECO:0000250"/>
    <property type="project" value="UniProtKB"/>
</dbReference>
<dbReference type="GO" id="GO:0046872">
    <property type="term" value="F:metal ion binding"/>
    <property type="evidence" value="ECO:0007669"/>
    <property type="project" value="UniProtKB-KW"/>
</dbReference>
<dbReference type="GO" id="GO:0043022">
    <property type="term" value="F:ribosome binding"/>
    <property type="evidence" value="ECO:0000250"/>
    <property type="project" value="UniProtKB"/>
</dbReference>
<dbReference type="GO" id="GO:0051301">
    <property type="term" value="P:cell division"/>
    <property type="evidence" value="ECO:0007669"/>
    <property type="project" value="UniProtKB-KW"/>
</dbReference>
<dbReference type="GO" id="GO:0070651">
    <property type="term" value="P:nonfunctional rRNA decay"/>
    <property type="evidence" value="ECO:0007669"/>
    <property type="project" value="TreeGrafter"/>
</dbReference>
<dbReference type="GO" id="GO:0070966">
    <property type="term" value="P:nuclear-transcribed mRNA catabolic process, no-go decay"/>
    <property type="evidence" value="ECO:0000250"/>
    <property type="project" value="UniProtKB"/>
</dbReference>
<dbReference type="GO" id="GO:0070481">
    <property type="term" value="P:nuclear-transcribed mRNA catabolic process, non-stop decay"/>
    <property type="evidence" value="ECO:0007669"/>
    <property type="project" value="InterPro"/>
</dbReference>
<dbReference type="GO" id="GO:0006417">
    <property type="term" value="P:regulation of translation"/>
    <property type="evidence" value="ECO:0007669"/>
    <property type="project" value="UniProtKB-KW"/>
</dbReference>
<dbReference type="GO" id="GO:0072344">
    <property type="term" value="P:rescue of stalled ribosome"/>
    <property type="evidence" value="ECO:0000250"/>
    <property type="project" value="UniProtKB"/>
</dbReference>
<dbReference type="GO" id="GO:0032790">
    <property type="term" value="P:ribosome disassembly"/>
    <property type="evidence" value="ECO:0000250"/>
    <property type="project" value="UniProtKB"/>
</dbReference>
<dbReference type="GO" id="GO:0071025">
    <property type="term" value="P:RNA surveillance"/>
    <property type="evidence" value="ECO:0007669"/>
    <property type="project" value="InterPro"/>
</dbReference>
<dbReference type="FunFam" id="2.30.30.870:FF:000001">
    <property type="entry name" value="Protein pelota homolog"/>
    <property type="match status" value="1"/>
</dbReference>
<dbReference type="FunFam" id="3.30.1330.30:FF:000008">
    <property type="entry name" value="Protein pelota homolog"/>
    <property type="match status" value="1"/>
</dbReference>
<dbReference type="FunFam" id="3.30.420.60:FF:000002">
    <property type="entry name" value="Protein pelota homolog"/>
    <property type="match status" value="1"/>
</dbReference>
<dbReference type="Gene3D" id="3.30.1330.30">
    <property type="match status" value="1"/>
</dbReference>
<dbReference type="Gene3D" id="3.30.420.60">
    <property type="entry name" value="eRF1 domain 2"/>
    <property type="match status" value="1"/>
</dbReference>
<dbReference type="Gene3D" id="2.30.30.870">
    <property type="entry name" value="Pelota, domain A"/>
    <property type="match status" value="1"/>
</dbReference>
<dbReference type="InterPro" id="IPR042226">
    <property type="entry name" value="eFR1_2_sf"/>
</dbReference>
<dbReference type="InterPro" id="IPR005140">
    <property type="entry name" value="eRF1_1_Pelota"/>
</dbReference>
<dbReference type="InterPro" id="IPR005141">
    <property type="entry name" value="eRF1_2"/>
</dbReference>
<dbReference type="InterPro" id="IPR005142">
    <property type="entry name" value="eRF1_3"/>
</dbReference>
<dbReference type="InterPro" id="IPR038069">
    <property type="entry name" value="Pelota/DOM34_N"/>
</dbReference>
<dbReference type="InterPro" id="IPR029064">
    <property type="entry name" value="Ribosomal_eL30-like_sf"/>
</dbReference>
<dbReference type="InterPro" id="IPR004405">
    <property type="entry name" value="Transl-rel_pelota"/>
</dbReference>
<dbReference type="NCBIfam" id="TIGR00111">
    <property type="entry name" value="pelota"/>
    <property type="match status" value="1"/>
</dbReference>
<dbReference type="PANTHER" id="PTHR10853">
    <property type="entry name" value="PELOTA"/>
    <property type="match status" value="1"/>
</dbReference>
<dbReference type="PANTHER" id="PTHR10853:SF0">
    <property type="entry name" value="PROTEIN PELOTA HOMOLOG"/>
    <property type="match status" value="1"/>
</dbReference>
<dbReference type="Pfam" id="PF03463">
    <property type="entry name" value="eRF1_1"/>
    <property type="match status" value="1"/>
</dbReference>
<dbReference type="Pfam" id="PF03464">
    <property type="entry name" value="eRF1_2"/>
    <property type="match status" value="1"/>
</dbReference>
<dbReference type="Pfam" id="PF03465">
    <property type="entry name" value="eRF1_3"/>
    <property type="match status" value="1"/>
</dbReference>
<dbReference type="SMART" id="SM01194">
    <property type="entry name" value="eRF1_1"/>
    <property type="match status" value="1"/>
</dbReference>
<dbReference type="SUPFAM" id="SSF159065">
    <property type="entry name" value="Dom34/Pelota N-terminal domain-like"/>
    <property type="match status" value="1"/>
</dbReference>
<dbReference type="SUPFAM" id="SSF55315">
    <property type="entry name" value="L30e-like"/>
    <property type="match status" value="1"/>
</dbReference>
<dbReference type="SUPFAM" id="SSF53137">
    <property type="entry name" value="Translational machinery components"/>
    <property type="match status" value="1"/>
</dbReference>
<accession>Q5RCE3</accession>
<sequence>MKLVRKNIEKDNAGQVTLVPEEPEDMWHTYNLVQVGDSLRASTIRKVQTESSTGSVGSNRVRTTLTLCVEAIDFDSQACQLRVKGTNIQENEYVKMGAYHTIELEPNRQFTLAKKQWDSVVLERIEQACDPAWSADVAAVVMQEGLAHICLVTPSMTLTRAKVEVNIPRKRKGNCSQHDRALERFYEQVVQAIQRHIHFDVVKCILVASPGFVREQFCDYMFQQAVKTDNKLLLENRSKFLQVHASSGHKYSLKEVLCDPTVASRLSDTKAAGEVKALDDFYKMLQHGPDRAFYGLKQVEKANEAMAIDTLLISDELFRHQDVATRSRYVRLVDSVKENAGTVRIFSSLHVSGEQLSQLTGVAAILRFPVPELSDQEDDSSSEED</sequence>
<organism>
    <name type="scientific">Pongo abelii</name>
    <name type="common">Sumatran orangutan</name>
    <name type="synonym">Pongo pygmaeus abelii</name>
    <dbReference type="NCBI Taxonomy" id="9601"/>
    <lineage>
        <taxon>Eukaryota</taxon>
        <taxon>Metazoa</taxon>
        <taxon>Chordata</taxon>
        <taxon>Craniata</taxon>
        <taxon>Vertebrata</taxon>
        <taxon>Euteleostomi</taxon>
        <taxon>Mammalia</taxon>
        <taxon>Eutheria</taxon>
        <taxon>Euarchontoglires</taxon>
        <taxon>Primates</taxon>
        <taxon>Haplorrhini</taxon>
        <taxon>Catarrhini</taxon>
        <taxon>Hominidae</taxon>
        <taxon>Pongo</taxon>
    </lineage>
</organism>
<comment type="function">
    <text evidence="2">Component of the Pelota-HBS1L complex, a complex that recognizes stalled ribosomes and triggers the No-Go Decay (NGD) pathway. In the Pelota-HBS1L complex, PELO recognizes ribosomes stalled at the 3' end of an mRNA and engages stalled ribosomes by destabilizing mRNA in the mRNA channel. Following mRNA extraction from stalled ribosomes by the SKI complex, the Pelota-HBS1L complex promotes recruitment of ABCE1, which drives the disassembly of stalled ribosomes, followed by degradation of damaged mRNAs as part of the NGD pathway. As part of the PINK1-regulated signaling, upon mitochondrial damage is recruited to the ribosome/mRNA-ribonucleoprotein complex associated to mitochondrial outer membrane thereby enabling the recruitment of autophagy receptors and induction of mitophagy.</text>
</comment>
<comment type="cofactor">
    <cofactor evidence="1">
        <name>a divalent metal cation</name>
        <dbReference type="ChEBI" id="CHEBI:60240"/>
    </cofactor>
</comment>
<comment type="subunit">
    <text evidence="2">Component of the Pelota-HBS1L complex, also named Dom34-Hbs1 complex, composed of PELO and HBS1L. Interacts with PINK1. Interacts with ABCE1. Interacts with CNOT4.</text>
</comment>
<comment type="subcellular location">
    <subcellularLocation>
        <location evidence="2">Cytoplasm</location>
    </subcellularLocation>
</comment>
<comment type="similarity">
    <text evidence="3">Belongs to the eukaryotic release factor 1 family. Pelota subfamily.</text>
</comment>
<proteinExistence type="evidence at transcript level"/>
<protein>
    <recommendedName>
        <fullName>Protein pelota homolog</fullName>
    </recommendedName>
</protein>